<organism>
    <name type="scientific">Salinispora arenicola (strain CNS-205)</name>
    <dbReference type="NCBI Taxonomy" id="391037"/>
    <lineage>
        <taxon>Bacteria</taxon>
        <taxon>Bacillati</taxon>
        <taxon>Actinomycetota</taxon>
        <taxon>Actinomycetes</taxon>
        <taxon>Micromonosporales</taxon>
        <taxon>Micromonosporaceae</taxon>
        <taxon>Salinispora</taxon>
    </lineage>
</organism>
<protein>
    <recommendedName>
        <fullName evidence="1">Orotidine 5'-phosphate decarboxylase</fullName>
        <ecNumber evidence="1">4.1.1.23</ecNumber>
    </recommendedName>
    <alternativeName>
        <fullName evidence="1">OMP decarboxylase</fullName>
        <shortName evidence="1">OMPDCase</shortName>
        <shortName evidence="1">OMPdecase</shortName>
    </alternativeName>
</protein>
<accession>A8LY20</accession>
<keyword id="KW-0210">Decarboxylase</keyword>
<keyword id="KW-0456">Lyase</keyword>
<keyword id="KW-0665">Pyrimidine biosynthesis</keyword>
<feature type="chain" id="PRO_1000085577" description="Orotidine 5'-phosphate decarboxylase">
    <location>
        <begin position="1"/>
        <end position="278"/>
    </location>
</feature>
<feature type="active site" description="Proton donor" evidence="1">
    <location>
        <position position="96"/>
    </location>
</feature>
<sequence length="278" mass="28171">MESFGARLHRAVAERGPLCVGIDPHPGLLARWGLDDDVHGLERFADTVVEALGDRVAVVKPQSAFFERFGSRGVAVLESTIRQLRLAGSLVLLDVKRGDIGSTVAAYASAYLEPSSPLHVDAVTVSPYLGVGALAPMFDMAAAKGGGVFVLALTSNPEGAAVQRARTAGGRTVAQVVIDEISQLNAGAQPLGSVGLVVGATIGETGHDLAAVNGPLLAPGLGAQGASAADLRVVFGSALPAVLPAYSREVLAAGPDVAALRAAADRVLADCRAALTGS</sequence>
<proteinExistence type="inferred from homology"/>
<dbReference type="EC" id="4.1.1.23" evidence="1"/>
<dbReference type="EMBL" id="CP000850">
    <property type="protein sequence ID" value="ABV97737.1"/>
    <property type="molecule type" value="Genomic_DNA"/>
</dbReference>
<dbReference type="SMR" id="A8LY20"/>
<dbReference type="STRING" id="391037.Sare_1852"/>
<dbReference type="KEGG" id="saq:Sare_1852"/>
<dbReference type="PATRIC" id="fig|391037.6.peg.1880"/>
<dbReference type="eggNOG" id="COG0284">
    <property type="taxonomic scope" value="Bacteria"/>
</dbReference>
<dbReference type="HOGENOM" id="CLU_060704_0_0_11"/>
<dbReference type="OrthoDB" id="9808470at2"/>
<dbReference type="UniPathway" id="UPA00070">
    <property type="reaction ID" value="UER00120"/>
</dbReference>
<dbReference type="GO" id="GO:0004590">
    <property type="term" value="F:orotidine-5'-phosphate decarboxylase activity"/>
    <property type="evidence" value="ECO:0007669"/>
    <property type="project" value="UniProtKB-UniRule"/>
</dbReference>
<dbReference type="GO" id="GO:0006207">
    <property type="term" value="P:'de novo' pyrimidine nucleobase biosynthetic process"/>
    <property type="evidence" value="ECO:0007669"/>
    <property type="project" value="InterPro"/>
</dbReference>
<dbReference type="GO" id="GO:0044205">
    <property type="term" value="P:'de novo' UMP biosynthetic process"/>
    <property type="evidence" value="ECO:0007669"/>
    <property type="project" value="UniProtKB-UniRule"/>
</dbReference>
<dbReference type="CDD" id="cd04725">
    <property type="entry name" value="OMP_decarboxylase_like"/>
    <property type="match status" value="1"/>
</dbReference>
<dbReference type="Gene3D" id="3.20.20.70">
    <property type="entry name" value="Aldolase class I"/>
    <property type="match status" value="1"/>
</dbReference>
<dbReference type="HAMAP" id="MF_01215">
    <property type="entry name" value="OMPdecase_type2"/>
    <property type="match status" value="1"/>
</dbReference>
<dbReference type="InterPro" id="IPR013785">
    <property type="entry name" value="Aldolase_TIM"/>
</dbReference>
<dbReference type="InterPro" id="IPR018089">
    <property type="entry name" value="OMPdecase_AS"/>
</dbReference>
<dbReference type="InterPro" id="IPR011995">
    <property type="entry name" value="OMPdecase_type-2"/>
</dbReference>
<dbReference type="InterPro" id="IPR001754">
    <property type="entry name" value="OMPdeCOase_dom"/>
</dbReference>
<dbReference type="InterPro" id="IPR011060">
    <property type="entry name" value="RibuloseP-bd_barrel"/>
</dbReference>
<dbReference type="NCBIfam" id="TIGR02127">
    <property type="entry name" value="pyrF_sub2"/>
    <property type="match status" value="1"/>
</dbReference>
<dbReference type="PANTHER" id="PTHR43375">
    <property type="entry name" value="OROTIDINE 5'-PHOSPHATE DECARBOXYLASE"/>
    <property type="match status" value="1"/>
</dbReference>
<dbReference type="PANTHER" id="PTHR43375:SF1">
    <property type="entry name" value="OROTIDINE 5'-PHOSPHATE DECARBOXYLASE"/>
    <property type="match status" value="1"/>
</dbReference>
<dbReference type="Pfam" id="PF00215">
    <property type="entry name" value="OMPdecase"/>
    <property type="match status" value="1"/>
</dbReference>
<dbReference type="SMART" id="SM00934">
    <property type="entry name" value="OMPdecase"/>
    <property type="match status" value="1"/>
</dbReference>
<dbReference type="SUPFAM" id="SSF51366">
    <property type="entry name" value="Ribulose-phoshate binding barrel"/>
    <property type="match status" value="1"/>
</dbReference>
<dbReference type="PROSITE" id="PS00156">
    <property type="entry name" value="OMPDECASE"/>
    <property type="match status" value="1"/>
</dbReference>
<gene>
    <name evidence="1" type="primary">pyrF</name>
    <name type="ordered locus">Sare_1852</name>
</gene>
<evidence type="ECO:0000255" key="1">
    <source>
        <dbReference type="HAMAP-Rule" id="MF_01215"/>
    </source>
</evidence>
<name>PYRF_SALAI</name>
<comment type="catalytic activity">
    <reaction evidence="1">
        <text>orotidine 5'-phosphate + H(+) = UMP + CO2</text>
        <dbReference type="Rhea" id="RHEA:11596"/>
        <dbReference type="ChEBI" id="CHEBI:15378"/>
        <dbReference type="ChEBI" id="CHEBI:16526"/>
        <dbReference type="ChEBI" id="CHEBI:57538"/>
        <dbReference type="ChEBI" id="CHEBI:57865"/>
        <dbReference type="EC" id="4.1.1.23"/>
    </reaction>
</comment>
<comment type="pathway">
    <text evidence="1">Pyrimidine metabolism; UMP biosynthesis via de novo pathway; UMP from orotate: step 2/2.</text>
</comment>
<comment type="similarity">
    <text evidence="1">Belongs to the OMP decarboxylase family. Type 2 subfamily.</text>
</comment>
<reference key="1">
    <citation type="submission" date="2007-10" db="EMBL/GenBank/DDBJ databases">
        <title>Complete sequence of Salinispora arenicola CNS-205.</title>
        <authorList>
            <consortium name="US DOE Joint Genome Institute"/>
            <person name="Copeland A."/>
            <person name="Lucas S."/>
            <person name="Lapidus A."/>
            <person name="Barry K."/>
            <person name="Glavina del Rio T."/>
            <person name="Dalin E."/>
            <person name="Tice H."/>
            <person name="Pitluck S."/>
            <person name="Foster B."/>
            <person name="Schmutz J."/>
            <person name="Larimer F."/>
            <person name="Land M."/>
            <person name="Hauser L."/>
            <person name="Kyrpides N."/>
            <person name="Ivanova N."/>
            <person name="Jensen P.R."/>
            <person name="Moore B.S."/>
            <person name="Penn K."/>
            <person name="Jenkins C."/>
            <person name="Udwary D."/>
            <person name="Xiang L."/>
            <person name="Gontang E."/>
            <person name="Richardson P."/>
        </authorList>
    </citation>
    <scope>NUCLEOTIDE SEQUENCE [LARGE SCALE GENOMIC DNA]</scope>
    <source>
        <strain>CNS-205</strain>
    </source>
</reference>